<accession>A4G964</accession>
<comment type="function">
    <text evidence="1">Catalyzes the ATP-dependent conversion of 7-carboxy-7-deazaguanine (CDG) to 7-cyano-7-deazaguanine (preQ(0)).</text>
</comment>
<comment type="catalytic activity">
    <reaction evidence="1">
        <text>7-carboxy-7-deazaguanine + NH4(+) + ATP = 7-cyano-7-deazaguanine + ADP + phosphate + H2O + H(+)</text>
        <dbReference type="Rhea" id="RHEA:27982"/>
        <dbReference type="ChEBI" id="CHEBI:15377"/>
        <dbReference type="ChEBI" id="CHEBI:15378"/>
        <dbReference type="ChEBI" id="CHEBI:28938"/>
        <dbReference type="ChEBI" id="CHEBI:30616"/>
        <dbReference type="ChEBI" id="CHEBI:43474"/>
        <dbReference type="ChEBI" id="CHEBI:45075"/>
        <dbReference type="ChEBI" id="CHEBI:61036"/>
        <dbReference type="ChEBI" id="CHEBI:456216"/>
        <dbReference type="EC" id="6.3.4.20"/>
    </reaction>
</comment>
<comment type="cofactor">
    <cofactor evidence="1">
        <name>Zn(2+)</name>
        <dbReference type="ChEBI" id="CHEBI:29105"/>
    </cofactor>
    <text evidence="1">Binds 1 zinc ion per subunit.</text>
</comment>
<comment type="pathway">
    <text evidence="1">Purine metabolism; 7-cyano-7-deazaguanine biosynthesis.</text>
</comment>
<comment type="similarity">
    <text evidence="1">Belongs to the QueC family.</text>
</comment>
<feature type="chain" id="PRO_1000069771" description="7-cyano-7-deazaguanine synthase">
    <location>
        <begin position="1"/>
        <end position="233"/>
    </location>
</feature>
<feature type="binding site" evidence="1">
    <location>
        <begin position="11"/>
        <end position="21"/>
    </location>
    <ligand>
        <name>ATP</name>
        <dbReference type="ChEBI" id="CHEBI:30616"/>
    </ligand>
</feature>
<feature type="binding site" evidence="1">
    <location>
        <position position="199"/>
    </location>
    <ligand>
        <name>Zn(2+)</name>
        <dbReference type="ChEBI" id="CHEBI:29105"/>
    </ligand>
</feature>
<feature type="binding site" evidence="1">
    <location>
        <position position="214"/>
    </location>
    <ligand>
        <name>Zn(2+)</name>
        <dbReference type="ChEBI" id="CHEBI:29105"/>
    </ligand>
</feature>
<feature type="binding site" evidence="1">
    <location>
        <position position="217"/>
    </location>
    <ligand>
        <name>Zn(2+)</name>
        <dbReference type="ChEBI" id="CHEBI:29105"/>
    </ligand>
</feature>
<feature type="binding site" evidence="1">
    <location>
        <position position="220"/>
    </location>
    <ligand>
        <name>Zn(2+)</name>
        <dbReference type="ChEBI" id="CHEBI:29105"/>
    </ligand>
</feature>
<protein>
    <recommendedName>
        <fullName evidence="1">7-cyano-7-deazaguanine synthase</fullName>
        <ecNumber evidence="1">6.3.4.20</ecNumber>
    </recommendedName>
    <alternativeName>
        <fullName evidence="1">7-cyano-7-carbaguanine synthase</fullName>
    </alternativeName>
    <alternativeName>
        <fullName evidence="1">PreQ(0) synthase</fullName>
    </alternativeName>
    <alternativeName>
        <fullName evidence="1">Queuosine biosynthesis protein QueC</fullName>
    </alternativeName>
</protein>
<reference key="1">
    <citation type="journal article" date="2007" name="PLoS Genet.">
        <title>A tale of two oxidation states: bacterial colonization of arsenic-rich environments.</title>
        <authorList>
            <person name="Muller D."/>
            <person name="Medigue C."/>
            <person name="Koechler S."/>
            <person name="Barbe V."/>
            <person name="Barakat M."/>
            <person name="Talla E."/>
            <person name="Bonnefoy V."/>
            <person name="Krin E."/>
            <person name="Arsene-Ploetze F."/>
            <person name="Carapito C."/>
            <person name="Chandler M."/>
            <person name="Cournoyer B."/>
            <person name="Cruveiller S."/>
            <person name="Dossat C."/>
            <person name="Duval S."/>
            <person name="Heymann M."/>
            <person name="Leize E."/>
            <person name="Lieutaud A."/>
            <person name="Lievremont D."/>
            <person name="Makita Y."/>
            <person name="Mangenot S."/>
            <person name="Nitschke W."/>
            <person name="Ortet P."/>
            <person name="Perdrial N."/>
            <person name="Schoepp B."/>
            <person name="Siguier P."/>
            <person name="Simeonova D.D."/>
            <person name="Rouy Z."/>
            <person name="Segurens B."/>
            <person name="Turlin E."/>
            <person name="Vallenet D."/>
            <person name="van Dorsselaer A."/>
            <person name="Weiss S."/>
            <person name="Weissenbach J."/>
            <person name="Lett M.-C."/>
            <person name="Danchin A."/>
            <person name="Bertin P.N."/>
        </authorList>
    </citation>
    <scope>NUCLEOTIDE SEQUENCE [LARGE SCALE GENOMIC DNA]</scope>
    <source>
        <strain>ULPAs1</strain>
    </source>
</reference>
<sequence>MNSANSALVLFSGGQDSTTCLAWALTHYARVETIGFDYGQRHAIELAVRPFLLEKMRLISPEWDGRLGADHMIDLSLIAKISNTALTSNVEIAMLENGLPNTFVPGRNLLFMTVAATVAYRRGLDVLVGGMCETDFSGYPDCRDDTMKALQVTLNLGMATKLKVETPLMWIDKAATWKMAQDLGGTPLLNLVRTGTHTCYLGERGELHDWGYGCGNCPACKLRARGYADFIAG</sequence>
<evidence type="ECO:0000255" key="1">
    <source>
        <dbReference type="HAMAP-Rule" id="MF_01633"/>
    </source>
</evidence>
<proteinExistence type="inferred from homology"/>
<organism>
    <name type="scientific">Herminiimonas arsenicoxydans</name>
    <dbReference type="NCBI Taxonomy" id="204773"/>
    <lineage>
        <taxon>Bacteria</taxon>
        <taxon>Pseudomonadati</taxon>
        <taxon>Pseudomonadota</taxon>
        <taxon>Betaproteobacteria</taxon>
        <taxon>Burkholderiales</taxon>
        <taxon>Oxalobacteraceae</taxon>
        <taxon>Herminiimonas</taxon>
    </lineage>
</organism>
<dbReference type="EC" id="6.3.4.20" evidence="1"/>
<dbReference type="EMBL" id="CU207211">
    <property type="protein sequence ID" value="CAL63051.1"/>
    <property type="molecule type" value="Genomic_DNA"/>
</dbReference>
<dbReference type="SMR" id="A4G964"/>
<dbReference type="STRING" id="204773.HEAR2938"/>
<dbReference type="KEGG" id="har:HEAR2938"/>
<dbReference type="eggNOG" id="COG0603">
    <property type="taxonomic scope" value="Bacteria"/>
</dbReference>
<dbReference type="HOGENOM" id="CLU_081854_0_0_4"/>
<dbReference type="OrthoDB" id="9789567at2"/>
<dbReference type="UniPathway" id="UPA00391"/>
<dbReference type="Proteomes" id="UP000006697">
    <property type="component" value="Chromosome"/>
</dbReference>
<dbReference type="GO" id="GO:0005524">
    <property type="term" value="F:ATP binding"/>
    <property type="evidence" value="ECO:0007669"/>
    <property type="project" value="UniProtKB-UniRule"/>
</dbReference>
<dbReference type="GO" id="GO:0016879">
    <property type="term" value="F:ligase activity, forming carbon-nitrogen bonds"/>
    <property type="evidence" value="ECO:0007669"/>
    <property type="project" value="UniProtKB-UniRule"/>
</dbReference>
<dbReference type="GO" id="GO:0008270">
    <property type="term" value="F:zinc ion binding"/>
    <property type="evidence" value="ECO:0007669"/>
    <property type="project" value="UniProtKB-UniRule"/>
</dbReference>
<dbReference type="GO" id="GO:0008616">
    <property type="term" value="P:queuosine biosynthetic process"/>
    <property type="evidence" value="ECO:0007669"/>
    <property type="project" value="UniProtKB-UniRule"/>
</dbReference>
<dbReference type="CDD" id="cd01995">
    <property type="entry name" value="QueC-like"/>
    <property type="match status" value="1"/>
</dbReference>
<dbReference type="Gene3D" id="3.40.50.620">
    <property type="entry name" value="HUPs"/>
    <property type="match status" value="1"/>
</dbReference>
<dbReference type="HAMAP" id="MF_01633">
    <property type="entry name" value="QueC"/>
    <property type="match status" value="1"/>
</dbReference>
<dbReference type="InterPro" id="IPR018317">
    <property type="entry name" value="QueC"/>
</dbReference>
<dbReference type="InterPro" id="IPR014729">
    <property type="entry name" value="Rossmann-like_a/b/a_fold"/>
</dbReference>
<dbReference type="NCBIfam" id="TIGR00364">
    <property type="entry name" value="7-cyano-7-deazaguanine synthase QueC"/>
    <property type="match status" value="1"/>
</dbReference>
<dbReference type="PANTHER" id="PTHR42914">
    <property type="entry name" value="7-CYANO-7-DEAZAGUANINE SYNTHASE"/>
    <property type="match status" value="1"/>
</dbReference>
<dbReference type="PANTHER" id="PTHR42914:SF1">
    <property type="entry name" value="7-CYANO-7-DEAZAGUANINE SYNTHASE"/>
    <property type="match status" value="1"/>
</dbReference>
<dbReference type="Pfam" id="PF06508">
    <property type="entry name" value="QueC"/>
    <property type="match status" value="1"/>
</dbReference>
<dbReference type="PIRSF" id="PIRSF006293">
    <property type="entry name" value="ExsB"/>
    <property type="match status" value="1"/>
</dbReference>
<dbReference type="SUPFAM" id="SSF52402">
    <property type="entry name" value="Adenine nucleotide alpha hydrolases-like"/>
    <property type="match status" value="1"/>
</dbReference>
<gene>
    <name evidence="1" type="primary">queC</name>
    <name type="ordered locus">HEAR2938</name>
</gene>
<keyword id="KW-0067">ATP-binding</keyword>
<keyword id="KW-0436">Ligase</keyword>
<keyword id="KW-0479">Metal-binding</keyword>
<keyword id="KW-0547">Nucleotide-binding</keyword>
<keyword id="KW-0671">Queuosine biosynthesis</keyword>
<keyword id="KW-1185">Reference proteome</keyword>
<keyword id="KW-0862">Zinc</keyword>
<name>QUEC_HERAR</name>